<organism>
    <name type="scientific">Archaeoglobus fulgidus (strain ATCC 49558 / DSM 4304 / JCM 9628 / NBRC 100126 / VC-16)</name>
    <dbReference type="NCBI Taxonomy" id="224325"/>
    <lineage>
        <taxon>Archaea</taxon>
        <taxon>Methanobacteriati</taxon>
        <taxon>Methanobacteriota</taxon>
        <taxon>Archaeoglobi</taxon>
        <taxon>Archaeoglobales</taxon>
        <taxon>Archaeoglobaceae</taxon>
        <taxon>Archaeoglobus</taxon>
    </lineage>
</organism>
<keyword id="KW-0067">ATP-binding</keyword>
<keyword id="KW-0436">Ligase</keyword>
<keyword id="KW-0460">Magnesium</keyword>
<keyword id="KW-0479">Metal-binding</keyword>
<keyword id="KW-0547">Nucleotide-binding</keyword>
<keyword id="KW-1185">Reference proteome</keyword>
<keyword id="KW-0816">Tricarboxylic acid cycle</keyword>
<evidence type="ECO:0000255" key="1">
    <source>
        <dbReference type="HAMAP-Rule" id="MF_00558"/>
    </source>
</evidence>
<proteinExistence type="inferred from homology"/>
<sequence>MRLHEYQAKQIFSKHGIRVARGELATSVEDVRGIAEELGGKVVLKSQVLVGGRGKAGGIKKAYSVEEAVEKAKEMFGSVLKGHIVEKIYVEEMIEVQREMYAGLTIDRANKGIAAILSSVGGMDIEEIAVKHPEKIARIAVNPKWGLWDYQIRELLLNSQMPREYWKEVASILKTLYRIMVHYEAELVEINPLVVTPDGLVAADARLNIDDSALFRHRDLEKLRDYTEADQMERIAMEKGLNYVKLDGNVGVLANGAGMAMATMDLIYIYGGKPANFLDIGGGASAEVVREAINLILSDKNVKVVFINIFGGITRCDEVAKGLKEALADVSTPVVVRLAGTNEEEGRKIMDEFAKDRPNFHIVETMEEGAEKAVKLAEEV</sequence>
<name>SUCC2_ARCFU</name>
<reference key="1">
    <citation type="journal article" date="1997" name="Nature">
        <title>The complete genome sequence of the hyperthermophilic, sulphate-reducing archaeon Archaeoglobus fulgidus.</title>
        <authorList>
            <person name="Klenk H.-P."/>
            <person name="Clayton R.A."/>
            <person name="Tomb J.-F."/>
            <person name="White O."/>
            <person name="Nelson K.E."/>
            <person name="Ketchum K.A."/>
            <person name="Dodson R.J."/>
            <person name="Gwinn M.L."/>
            <person name="Hickey E.K."/>
            <person name="Peterson J.D."/>
            <person name="Richardson D.L."/>
            <person name="Kerlavage A.R."/>
            <person name="Graham D.E."/>
            <person name="Kyrpides N.C."/>
            <person name="Fleischmann R.D."/>
            <person name="Quackenbush J."/>
            <person name="Lee N.H."/>
            <person name="Sutton G.G."/>
            <person name="Gill S.R."/>
            <person name="Kirkness E.F."/>
            <person name="Dougherty B.A."/>
            <person name="McKenney K."/>
            <person name="Adams M.D."/>
            <person name="Loftus B.J."/>
            <person name="Peterson S.N."/>
            <person name="Reich C.I."/>
            <person name="McNeil L.K."/>
            <person name="Badger J.H."/>
            <person name="Glodek A."/>
            <person name="Zhou L."/>
            <person name="Overbeek R."/>
            <person name="Gocayne J.D."/>
            <person name="Weidman J.F."/>
            <person name="McDonald L.A."/>
            <person name="Utterback T.R."/>
            <person name="Cotton M.D."/>
            <person name="Spriggs T."/>
            <person name="Artiach P."/>
            <person name="Kaine B.P."/>
            <person name="Sykes S.M."/>
            <person name="Sadow P.W."/>
            <person name="D'Andrea K.P."/>
            <person name="Bowman C."/>
            <person name="Fujii C."/>
            <person name="Garland S.A."/>
            <person name="Mason T.M."/>
            <person name="Olsen G.J."/>
            <person name="Fraser C.M."/>
            <person name="Smith H.O."/>
            <person name="Woese C.R."/>
            <person name="Venter J.C."/>
        </authorList>
    </citation>
    <scope>NUCLEOTIDE SEQUENCE [LARGE SCALE GENOMIC DNA]</scope>
    <source>
        <strain>ATCC 49558 / DSM 4304 / JCM 9628 / NBRC 100126 / VC-16</strain>
    </source>
</reference>
<protein>
    <recommendedName>
        <fullName evidence="1">Succinate--CoA ligase [ADP-forming] subunit beta 2</fullName>
        <ecNumber evidence="1">6.2.1.5</ecNumber>
    </recommendedName>
    <alternativeName>
        <fullName evidence="1">Succinyl-CoA synthetase subunit beta 2</fullName>
        <shortName evidence="1">SCS-beta 2</shortName>
    </alternativeName>
</protein>
<feature type="chain" id="PRO_0000102883" description="Succinate--CoA ligase [ADP-forming] subunit beta 2">
    <location>
        <begin position="1"/>
        <end position="380"/>
    </location>
</feature>
<feature type="domain" description="ATP-grasp" evidence="1">
    <location>
        <begin position="9"/>
        <end position="235"/>
    </location>
</feature>
<feature type="binding site" evidence="1">
    <location>
        <position position="45"/>
    </location>
    <ligand>
        <name>ATP</name>
        <dbReference type="ChEBI" id="CHEBI:30616"/>
    </ligand>
</feature>
<feature type="binding site" evidence="1">
    <location>
        <begin position="52"/>
        <end position="54"/>
    </location>
    <ligand>
        <name>ATP</name>
        <dbReference type="ChEBI" id="CHEBI:30616"/>
    </ligand>
</feature>
<feature type="binding site" evidence="1">
    <location>
        <position position="91"/>
    </location>
    <ligand>
        <name>ATP</name>
        <dbReference type="ChEBI" id="CHEBI:30616"/>
    </ligand>
</feature>
<feature type="binding site" evidence="1">
    <location>
        <position position="94"/>
    </location>
    <ligand>
        <name>ATP</name>
        <dbReference type="ChEBI" id="CHEBI:30616"/>
    </ligand>
</feature>
<feature type="binding site" evidence="1">
    <location>
        <position position="99"/>
    </location>
    <ligand>
        <name>ATP</name>
        <dbReference type="ChEBI" id="CHEBI:30616"/>
    </ligand>
</feature>
<feature type="binding site" evidence="1">
    <location>
        <position position="191"/>
    </location>
    <ligand>
        <name>Mg(2+)</name>
        <dbReference type="ChEBI" id="CHEBI:18420"/>
    </ligand>
</feature>
<feature type="binding site" evidence="1">
    <location>
        <position position="204"/>
    </location>
    <ligand>
        <name>Mg(2+)</name>
        <dbReference type="ChEBI" id="CHEBI:18420"/>
    </ligand>
</feature>
<feature type="binding site" evidence="1">
    <location>
        <position position="255"/>
    </location>
    <ligand>
        <name>substrate</name>
        <note>ligand shared with subunit alpha</note>
    </ligand>
</feature>
<feature type="binding site" evidence="1">
    <location>
        <begin position="312"/>
        <end position="314"/>
    </location>
    <ligand>
        <name>substrate</name>
        <note>ligand shared with subunit alpha</note>
    </ligand>
</feature>
<comment type="function">
    <text evidence="1">Succinyl-CoA synthetase functions in the citric acid cycle (TCA), coupling the hydrolysis of succinyl-CoA to the synthesis of either ATP or GTP and thus represents the only step of substrate-level phosphorylation in the TCA. The beta subunit provides nucleotide specificity of the enzyme and binds the substrate succinate, while the binding sites for coenzyme A and phosphate are found in the alpha subunit.</text>
</comment>
<comment type="catalytic activity">
    <reaction evidence="1">
        <text>succinate + ATP + CoA = succinyl-CoA + ADP + phosphate</text>
        <dbReference type="Rhea" id="RHEA:17661"/>
        <dbReference type="ChEBI" id="CHEBI:30031"/>
        <dbReference type="ChEBI" id="CHEBI:30616"/>
        <dbReference type="ChEBI" id="CHEBI:43474"/>
        <dbReference type="ChEBI" id="CHEBI:57287"/>
        <dbReference type="ChEBI" id="CHEBI:57292"/>
        <dbReference type="ChEBI" id="CHEBI:456216"/>
        <dbReference type="EC" id="6.2.1.5"/>
    </reaction>
    <physiologicalReaction direction="right-to-left" evidence="1">
        <dbReference type="Rhea" id="RHEA:17663"/>
    </physiologicalReaction>
</comment>
<comment type="catalytic activity">
    <reaction evidence="1">
        <text>GTP + succinate + CoA = succinyl-CoA + GDP + phosphate</text>
        <dbReference type="Rhea" id="RHEA:22120"/>
        <dbReference type="ChEBI" id="CHEBI:30031"/>
        <dbReference type="ChEBI" id="CHEBI:37565"/>
        <dbReference type="ChEBI" id="CHEBI:43474"/>
        <dbReference type="ChEBI" id="CHEBI:57287"/>
        <dbReference type="ChEBI" id="CHEBI:57292"/>
        <dbReference type="ChEBI" id="CHEBI:58189"/>
    </reaction>
    <physiologicalReaction direction="right-to-left" evidence="1">
        <dbReference type="Rhea" id="RHEA:22122"/>
    </physiologicalReaction>
</comment>
<comment type="cofactor">
    <cofactor evidence="1">
        <name>Mg(2+)</name>
        <dbReference type="ChEBI" id="CHEBI:18420"/>
    </cofactor>
    <text evidence="1">Binds 1 Mg(2+) ion per subunit.</text>
</comment>
<comment type="pathway">
    <text evidence="1">Carbohydrate metabolism; tricarboxylic acid cycle; succinate from succinyl-CoA (ligase route): step 1/1.</text>
</comment>
<comment type="subunit">
    <text evidence="1">Heterotetramer of two alpha and two beta subunits.</text>
</comment>
<comment type="similarity">
    <text evidence="1">Belongs to the succinate/malate CoA ligase beta subunit family.</text>
</comment>
<dbReference type="EC" id="6.2.1.5" evidence="1"/>
<dbReference type="EMBL" id="AE000782">
    <property type="protein sequence ID" value="AAB89066.1"/>
    <property type="molecule type" value="Genomic_DNA"/>
</dbReference>
<dbReference type="PIR" id="B69523">
    <property type="entry name" value="B69523"/>
</dbReference>
<dbReference type="SMR" id="O28097"/>
<dbReference type="STRING" id="224325.AF_2186"/>
<dbReference type="PaxDb" id="224325-AF_2186"/>
<dbReference type="EnsemblBacteria" id="AAB89066">
    <property type="protein sequence ID" value="AAB89066"/>
    <property type="gene ID" value="AF_2186"/>
</dbReference>
<dbReference type="KEGG" id="afu:AF_2186"/>
<dbReference type="eggNOG" id="arCOG01337">
    <property type="taxonomic scope" value="Archaea"/>
</dbReference>
<dbReference type="HOGENOM" id="CLU_037430_0_2_2"/>
<dbReference type="OrthoDB" id="146449at2157"/>
<dbReference type="PhylomeDB" id="O28097"/>
<dbReference type="UniPathway" id="UPA00223">
    <property type="reaction ID" value="UER00999"/>
</dbReference>
<dbReference type="Proteomes" id="UP000002199">
    <property type="component" value="Chromosome"/>
</dbReference>
<dbReference type="GO" id="GO:0042709">
    <property type="term" value="C:succinate-CoA ligase complex"/>
    <property type="evidence" value="ECO:0007669"/>
    <property type="project" value="TreeGrafter"/>
</dbReference>
<dbReference type="GO" id="GO:0005524">
    <property type="term" value="F:ATP binding"/>
    <property type="evidence" value="ECO:0007669"/>
    <property type="project" value="UniProtKB-UniRule"/>
</dbReference>
<dbReference type="GO" id="GO:0000287">
    <property type="term" value="F:magnesium ion binding"/>
    <property type="evidence" value="ECO:0007669"/>
    <property type="project" value="UniProtKB-UniRule"/>
</dbReference>
<dbReference type="GO" id="GO:0004775">
    <property type="term" value="F:succinate-CoA ligase (ADP-forming) activity"/>
    <property type="evidence" value="ECO:0007669"/>
    <property type="project" value="UniProtKB-UniRule"/>
</dbReference>
<dbReference type="GO" id="GO:0004776">
    <property type="term" value="F:succinate-CoA ligase (GDP-forming) activity"/>
    <property type="evidence" value="ECO:0007669"/>
    <property type="project" value="RHEA"/>
</dbReference>
<dbReference type="GO" id="GO:0006104">
    <property type="term" value="P:succinyl-CoA metabolic process"/>
    <property type="evidence" value="ECO:0007669"/>
    <property type="project" value="TreeGrafter"/>
</dbReference>
<dbReference type="GO" id="GO:0006099">
    <property type="term" value="P:tricarboxylic acid cycle"/>
    <property type="evidence" value="ECO:0007669"/>
    <property type="project" value="UniProtKB-UniRule"/>
</dbReference>
<dbReference type="FunFam" id="3.30.470.20:FF:000002">
    <property type="entry name" value="Succinate--CoA ligase [ADP-forming] subunit beta"/>
    <property type="match status" value="1"/>
</dbReference>
<dbReference type="FunFam" id="3.40.50.261:FF:000007">
    <property type="entry name" value="Succinate--CoA ligase [ADP-forming] subunit beta"/>
    <property type="match status" value="1"/>
</dbReference>
<dbReference type="Gene3D" id="3.30.1490.20">
    <property type="entry name" value="ATP-grasp fold, A domain"/>
    <property type="match status" value="1"/>
</dbReference>
<dbReference type="Gene3D" id="3.30.470.20">
    <property type="entry name" value="ATP-grasp fold, B domain"/>
    <property type="match status" value="1"/>
</dbReference>
<dbReference type="Gene3D" id="3.40.50.261">
    <property type="entry name" value="Succinyl-CoA synthetase domains"/>
    <property type="match status" value="1"/>
</dbReference>
<dbReference type="HAMAP" id="MF_00558">
    <property type="entry name" value="Succ_CoA_beta"/>
    <property type="match status" value="1"/>
</dbReference>
<dbReference type="InterPro" id="IPR011761">
    <property type="entry name" value="ATP-grasp"/>
</dbReference>
<dbReference type="InterPro" id="IPR013650">
    <property type="entry name" value="ATP-grasp_succ-CoA_synth-type"/>
</dbReference>
<dbReference type="InterPro" id="IPR013815">
    <property type="entry name" value="ATP_grasp_subdomain_1"/>
</dbReference>
<dbReference type="InterPro" id="IPR017866">
    <property type="entry name" value="Succ-CoA_synthase_bsu_CS"/>
</dbReference>
<dbReference type="InterPro" id="IPR005811">
    <property type="entry name" value="SUCC_ACL_C"/>
</dbReference>
<dbReference type="InterPro" id="IPR005809">
    <property type="entry name" value="Succ_CoA_ligase-like_bsu"/>
</dbReference>
<dbReference type="InterPro" id="IPR016102">
    <property type="entry name" value="Succinyl-CoA_synth-like"/>
</dbReference>
<dbReference type="NCBIfam" id="NF001913">
    <property type="entry name" value="PRK00696.1"/>
    <property type="match status" value="1"/>
</dbReference>
<dbReference type="NCBIfam" id="TIGR01016">
    <property type="entry name" value="sucCoAbeta"/>
    <property type="match status" value="1"/>
</dbReference>
<dbReference type="PANTHER" id="PTHR11815:SF10">
    <property type="entry name" value="SUCCINATE--COA LIGASE [GDP-FORMING] SUBUNIT BETA, MITOCHONDRIAL"/>
    <property type="match status" value="1"/>
</dbReference>
<dbReference type="PANTHER" id="PTHR11815">
    <property type="entry name" value="SUCCINYL-COA SYNTHETASE BETA CHAIN"/>
    <property type="match status" value="1"/>
</dbReference>
<dbReference type="Pfam" id="PF08442">
    <property type="entry name" value="ATP-grasp_2"/>
    <property type="match status" value="1"/>
</dbReference>
<dbReference type="Pfam" id="PF00549">
    <property type="entry name" value="Ligase_CoA"/>
    <property type="match status" value="1"/>
</dbReference>
<dbReference type="PIRSF" id="PIRSF001554">
    <property type="entry name" value="SucCS_beta"/>
    <property type="match status" value="1"/>
</dbReference>
<dbReference type="SUPFAM" id="SSF56059">
    <property type="entry name" value="Glutathione synthetase ATP-binding domain-like"/>
    <property type="match status" value="1"/>
</dbReference>
<dbReference type="SUPFAM" id="SSF52210">
    <property type="entry name" value="Succinyl-CoA synthetase domains"/>
    <property type="match status" value="1"/>
</dbReference>
<dbReference type="PROSITE" id="PS50975">
    <property type="entry name" value="ATP_GRASP"/>
    <property type="match status" value="1"/>
</dbReference>
<dbReference type="PROSITE" id="PS01217">
    <property type="entry name" value="SUCCINYL_COA_LIG_3"/>
    <property type="match status" value="1"/>
</dbReference>
<accession>O28097</accession>
<gene>
    <name evidence="1" type="primary">sucC2</name>
    <name type="ordered locus">AF_2186</name>
</gene>